<feature type="chain" id="PRO_1000188572" description="Dual-specificity RNA methyltransferase RlmN">
    <location>
        <begin position="1"/>
        <end position="384"/>
    </location>
</feature>
<feature type="domain" description="Radical SAM core" evidence="2">
    <location>
        <begin position="111"/>
        <end position="350"/>
    </location>
</feature>
<feature type="active site" description="Proton acceptor" evidence="1">
    <location>
        <position position="105"/>
    </location>
</feature>
<feature type="active site" description="S-methylcysteine intermediate" evidence="1">
    <location>
        <position position="355"/>
    </location>
</feature>
<feature type="binding site" evidence="1">
    <location>
        <position position="125"/>
    </location>
    <ligand>
        <name>[4Fe-4S] cluster</name>
        <dbReference type="ChEBI" id="CHEBI:49883"/>
        <note>4Fe-4S-S-AdoMet</note>
    </ligand>
</feature>
<feature type="binding site" evidence="1">
    <location>
        <position position="129"/>
    </location>
    <ligand>
        <name>[4Fe-4S] cluster</name>
        <dbReference type="ChEBI" id="CHEBI:49883"/>
        <note>4Fe-4S-S-AdoMet</note>
    </ligand>
</feature>
<feature type="binding site" evidence="1">
    <location>
        <position position="132"/>
    </location>
    <ligand>
        <name>[4Fe-4S] cluster</name>
        <dbReference type="ChEBI" id="CHEBI:49883"/>
        <note>4Fe-4S-S-AdoMet</note>
    </ligand>
</feature>
<feature type="binding site" evidence="1">
    <location>
        <begin position="179"/>
        <end position="180"/>
    </location>
    <ligand>
        <name>S-adenosyl-L-methionine</name>
        <dbReference type="ChEBI" id="CHEBI:59789"/>
    </ligand>
</feature>
<feature type="binding site" evidence="1">
    <location>
        <position position="211"/>
    </location>
    <ligand>
        <name>S-adenosyl-L-methionine</name>
        <dbReference type="ChEBI" id="CHEBI:59789"/>
    </ligand>
</feature>
<feature type="binding site" evidence="1">
    <location>
        <begin position="233"/>
        <end position="235"/>
    </location>
    <ligand>
        <name>S-adenosyl-L-methionine</name>
        <dbReference type="ChEBI" id="CHEBI:59789"/>
    </ligand>
</feature>
<feature type="binding site" evidence="1">
    <location>
        <position position="312"/>
    </location>
    <ligand>
        <name>S-adenosyl-L-methionine</name>
        <dbReference type="ChEBI" id="CHEBI:59789"/>
    </ligand>
</feature>
<feature type="disulfide bond" description="(transient)" evidence="1">
    <location>
        <begin position="118"/>
        <end position="355"/>
    </location>
</feature>
<sequence>MSEQLVTPENVTTKDGKINLLDLNRQQMREFFKDLGEKPFRADQVMKWMYHYCCDNFDEMTDINKVLRGKLKEVAEIRAPEVVEEQRSSDGTIKWAIAVGDQRVETVYIPEDDRATLCVSSQVGCALECKFCSTAQQGFNRNLRVSEIIGQVWRAAKIVGAAKVTGQRPITNVVMMGMGEPLLNLNNVVPAMEIMLDDFGFGLSKRRVTLSTSGVVPALDKLGDMIDVALAISLHAPNDEIRDEIVPINKKYNIETFLAAVRRYLEKSNANQGRVTIEYVMLDHVNDGTEHAHQLAELLKDTPCKINLIPWNPFPGAPYGRSSNSRIDRFSKVLMSYGFTTIVRKTRGDDIDAACGQLAGDVIDRTKRTLRKRMQGEAIDIKAV</sequence>
<gene>
    <name evidence="1" type="primary">rlmN</name>
    <name type="ordered locus">ECIAI39_2718</name>
</gene>
<protein>
    <recommendedName>
        <fullName evidence="1">Dual-specificity RNA methyltransferase RlmN</fullName>
        <ecNumber evidence="1">2.1.1.192</ecNumber>
    </recommendedName>
    <alternativeName>
        <fullName evidence="1">23S rRNA (adenine(2503)-C(2))-methyltransferase</fullName>
    </alternativeName>
    <alternativeName>
        <fullName evidence="1">23S rRNA m2A2503 methyltransferase</fullName>
    </alternativeName>
    <alternativeName>
        <fullName evidence="1">Ribosomal RNA large subunit methyltransferase N</fullName>
    </alternativeName>
    <alternativeName>
        <fullName evidence="1">tRNA (adenine(37)-C(2))-methyltransferase</fullName>
    </alternativeName>
    <alternativeName>
        <fullName evidence="1">tRNA m2A37 methyltransferase</fullName>
    </alternativeName>
</protein>
<dbReference type="EC" id="2.1.1.192" evidence="1"/>
<dbReference type="EMBL" id="CU928164">
    <property type="protein sequence ID" value="CAR18841.1"/>
    <property type="molecule type" value="Genomic_DNA"/>
</dbReference>
<dbReference type="RefSeq" id="WP_000003317.1">
    <property type="nucleotide sequence ID" value="NC_011750.1"/>
</dbReference>
<dbReference type="RefSeq" id="YP_002408656.1">
    <property type="nucleotide sequence ID" value="NC_011750.1"/>
</dbReference>
<dbReference type="SMR" id="B7NRG7"/>
<dbReference type="STRING" id="585057.ECIAI39_2718"/>
<dbReference type="KEGG" id="ect:ECIAI39_2718"/>
<dbReference type="PATRIC" id="fig|585057.6.peg.2826"/>
<dbReference type="HOGENOM" id="CLU_029101_0_0_6"/>
<dbReference type="Proteomes" id="UP000000749">
    <property type="component" value="Chromosome"/>
</dbReference>
<dbReference type="GO" id="GO:0005737">
    <property type="term" value="C:cytoplasm"/>
    <property type="evidence" value="ECO:0007669"/>
    <property type="project" value="UniProtKB-SubCell"/>
</dbReference>
<dbReference type="GO" id="GO:0051539">
    <property type="term" value="F:4 iron, 4 sulfur cluster binding"/>
    <property type="evidence" value="ECO:0007669"/>
    <property type="project" value="UniProtKB-UniRule"/>
</dbReference>
<dbReference type="GO" id="GO:0046872">
    <property type="term" value="F:metal ion binding"/>
    <property type="evidence" value="ECO:0007669"/>
    <property type="project" value="UniProtKB-KW"/>
</dbReference>
<dbReference type="GO" id="GO:0070040">
    <property type="term" value="F:rRNA (adenine(2503)-C2-)-methyltransferase activity"/>
    <property type="evidence" value="ECO:0007669"/>
    <property type="project" value="UniProtKB-UniRule"/>
</dbReference>
<dbReference type="GO" id="GO:0019843">
    <property type="term" value="F:rRNA binding"/>
    <property type="evidence" value="ECO:0007669"/>
    <property type="project" value="UniProtKB-UniRule"/>
</dbReference>
<dbReference type="GO" id="GO:0002935">
    <property type="term" value="F:tRNA (adenine(37)-C2)-methyltransferase activity"/>
    <property type="evidence" value="ECO:0007669"/>
    <property type="project" value="UniProtKB-UniRule"/>
</dbReference>
<dbReference type="GO" id="GO:0000049">
    <property type="term" value="F:tRNA binding"/>
    <property type="evidence" value="ECO:0007669"/>
    <property type="project" value="UniProtKB-UniRule"/>
</dbReference>
<dbReference type="GO" id="GO:0070475">
    <property type="term" value="P:rRNA base methylation"/>
    <property type="evidence" value="ECO:0007669"/>
    <property type="project" value="UniProtKB-UniRule"/>
</dbReference>
<dbReference type="GO" id="GO:0030488">
    <property type="term" value="P:tRNA methylation"/>
    <property type="evidence" value="ECO:0007669"/>
    <property type="project" value="UniProtKB-UniRule"/>
</dbReference>
<dbReference type="CDD" id="cd01335">
    <property type="entry name" value="Radical_SAM"/>
    <property type="match status" value="1"/>
</dbReference>
<dbReference type="FunFam" id="1.10.150.530:FF:000001">
    <property type="entry name" value="Dual-specificity RNA methyltransferase RlmN"/>
    <property type="match status" value="1"/>
</dbReference>
<dbReference type="FunFam" id="3.20.20.70:FF:000008">
    <property type="entry name" value="Dual-specificity RNA methyltransferase RlmN"/>
    <property type="match status" value="1"/>
</dbReference>
<dbReference type="Gene3D" id="1.10.150.530">
    <property type="match status" value="1"/>
</dbReference>
<dbReference type="Gene3D" id="3.20.20.70">
    <property type="entry name" value="Aldolase class I"/>
    <property type="match status" value="1"/>
</dbReference>
<dbReference type="HAMAP" id="MF_01849">
    <property type="entry name" value="RNA_methyltr_RlmN"/>
    <property type="match status" value="1"/>
</dbReference>
<dbReference type="InterPro" id="IPR013785">
    <property type="entry name" value="Aldolase_TIM"/>
</dbReference>
<dbReference type="InterPro" id="IPR040072">
    <property type="entry name" value="Methyltransferase_A"/>
</dbReference>
<dbReference type="InterPro" id="IPR048641">
    <property type="entry name" value="RlmN_N"/>
</dbReference>
<dbReference type="InterPro" id="IPR027492">
    <property type="entry name" value="RNA_MTrfase_RlmN"/>
</dbReference>
<dbReference type="InterPro" id="IPR004383">
    <property type="entry name" value="rRNA_lsu_MTrfase_RlmN/Cfr"/>
</dbReference>
<dbReference type="InterPro" id="IPR007197">
    <property type="entry name" value="rSAM"/>
</dbReference>
<dbReference type="NCBIfam" id="NF008396">
    <property type="entry name" value="PRK11194.1"/>
    <property type="match status" value="1"/>
</dbReference>
<dbReference type="NCBIfam" id="TIGR00048">
    <property type="entry name" value="rRNA_mod_RlmN"/>
    <property type="match status" value="1"/>
</dbReference>
<dbReference type="PANTHER" id="PTHR30544">
    <property type="entry name" value="23S RRNA METHYLTRANSFERASE"/>
    <property type="match status" value="1"/>
</dbReference>
<dbReference type="PANTHER" id="PTHR30544:SF5">
    <property type="entry name" value="RADICAL SAM CORE DOMAIN-CONTAINING PROTEIN"/>
    <property type="match status" value="1"/>
</dbReference>
<dbReference type="Pfam" id="PF04055">
    <property type="entry name" value="Radical_SAM"/>
    <property type="match status" value="1"/>
</dbReference>
<dbReference type="Pfam" id="PF21016">
    <property type="entry name" value="RlmN_N"/>
    <property type="match status" value="1"/>
</dbReference>
<dbReference type="PIRSF" id="PIRSF006004">
    <property type="entry name" value="CHP00048"/>
    <property type="match status" value="1"/>
</dbReference>
<dbReference type="SFLD" id="SFLDF00275">
    <property type="entry name" value="adenosine_C2_methyltransferase"/>
    <property type="match status" value="1"/>
</dbReference>
<dbReference type="SFLD" id="SFLDG01062">
    <property type="entry name" value="methyltransferase_(Class_A)"/>
    <property type="match status" value="1"/>
</dbReference>
<dbReference type="SUPFAM" id="SSF102114">
    <property type="entry name" value="Radical SAM enzymes"/>
    <property type="match status" value="1"/>
</dbReference>
<dbReference type="PROSITE" id="PS51918">
    <property type="entry name" value="RADICAL_SAM"/>
    <property type="match status" value="1"/>
</dbReference>
<comment type="function">
    <text evidence="1">Specifically methylates position 2 of adenine 2503 in 23S rRNA and position 2 of adenine 37 in tRNAs. m2A2503 modification seems to play a crucial role in the proofreading step occurring at the peptidyl transferase center and thus would serve to optimize ribosomal fidelity.</text>
</comment>
<comment type="catalytic activity">
    <reaction evidence="1">
        <text>adenosine(2503) in 23S rRNA + 2 reduced [2Fe-2S]-[ferredoxin] + 2 S-adenosyl-L-methionine = 2-methyladenosine(2503) in 23S rRNA + 5'-deoxyadenosine + L-methionine + 2 oxidized [2Fe-2S]-[ferredoxin] + S-adenosyl-L-homocysteine</text>
        <dbReference type="Rhea" id="RHEA:42916"/>
        <dbReference type="Rhea" id="RHEA-COMP:10000"/>
        <dbReference type="Rhea" id="RHEA-COMP:10001"/>
        <dbReference type="Rhea" id="RHEA-COMP:10152"/>
        <dbReference type="Rhea" id="RHEA-COMP:10282"/>
        <dbReference type="ChEBI" id="CHEBI:17319"/>
        <dbReference type="ChEBI" id="CHEBI:33737"/>
        <dbReference type="ChEBI" id="CHEBI:33738"/>
        <dbReference type="ChEBI" id="CHEBI:57844"/>
        <dbReference type="ChEBI" id="CHEBI:57856"/>
        <dbReference type="ChEBI" id="CHEBI:59789"/>
        <dbReference type="ChEBI" id="CHEBI:74411"/>
        <dbReference type="ChEBI" id="CHEBI:74497"/>
        <dbReference type="EC" id="2.1.1.192"/>
    </reaction>
</comment>
<comment type="catalytic activity">
    <reaction evidence="1">
        <text>adenosine(37) in tRNA + 2 reduced [2Fe-2S]-[ferredoxin] + 2 S-adenosyl-L-methionine = 2-methyladenosine(37) in tRNA + 5'-deoxyadenosine + L-methionine + 2 oxidized [2Fe-2S]-[ferredoxin] + S-adenosyl-L-homocysteine</text>
        <dbReference type="Rhea" id="RHEA:43332"/>
        <dbReference type="Rhea" id="RHEA-COMP:10000"/>
        <dbReference type="Rhea" id="RHEA-COMP:10001"/>
        <dbReference type="Rhea" id="RHEA-COMP:10162"/>
        <dbReference type="Rhea" id="RHEA-COMP:10485"/>
        <dbReference type="ChEBI" id="CHEBI:17319"/>
        <dbReference type="ChEBI" id="CHEBI:33737"/>
        <dbReference type="ChEBI" id="CHEBI:33738"/>
        <dbReference type="ChEBI" id="CHEBI:57844"/>
        <dbReference type="ChEBI" id="CHEBI:57856"/>
        <dbReference type="ChEBI" id="CHEBI:59789"/>
        <dbReference type="ChEBI" id="CHEBI:74411"/>
        <dbReference type="ChEBI" id="CHEBI:74497"/>
        <dbReference type="EC" id="2.1.1.192"/>
    </reaction>
</comment>
<comment type="cofactor">
    <cofactor evidence="1">
        <name>[4Fe-4S] cluster</name>
        <dbReference type="ChEBI" id="CHEBI:49883"/>
    </cofactor>
    <text evidence="1">Binds 1 [4Fe-4S] cluster. The cluster is coordinated with 3 cysteines and an exchangeable S-adenosyl-L-methionine.</text>
</comment>
<comment type="subcellular location">
    <subcellularLocation>
        <location evidence="1">Cytoplasm</location>
    </subcellularLocation>
</comment>
<comment type="miscellaneous">
    <text evidence="1">Reaction proceeds by a ping-pong mechanism involving intermediate methylation of a conserved cysteine residue.</text>
</comment>
<comment type="similarity">
    <text evidence="1">Belongs to the radical SAM superfamily. RlmN family.</text>
</comment>
<name>RLMN_ECO7I</name>
<accession>B7NRG7</accession>
<keyword id="KW-0004">4Fe-4S</keyword>
<keyword id="KW-0963">Cytoplasm</keyword>
<keyword id="KW-1015">Disulfide bond</keyword>
<keyword id="KW-0408">Iron</keyword>
<keyword id="KW-0411">Iron-sulfur</keyword>
<keyword id="KW-0479">Metal-binding</keyword>
<keyword id="KW-0489">Methyltransferase</keyword>
<keyword id="KW-0698">rRNA processing</keyword>
<keyword id="KW-0949">S-adenosyl-L-methionine</keyword>
<keyword id="KW-0808">Transferase</keyword>
<keyword id="KW-0819">tRNA processing</keyword>
<evidence type="ECO:0000255" key="1">
    <source>
        <dbReference type="HAMAP-Rule" id="MF_01849"/>
    </source>
</evidence>
<evidence type="ECO:0000255" key="2">
    <source>
        <dbReference type="PROSITE-ProRule" id="PRU01266"/>
    </source>
</evidence>
<organism>
    <name type="scientific">Escherichia coli O7:K1 (strain IAI39 / ExPEC)</name>
    <dbReference type="NCBI Taxonomy" id="585057"/>
    <lineage>
        <taxon>Bacteria</taxon>
        <taxon>Pseudomonadati</taxon>
        <taxon>Pseudomonadota</taxon>
        <taxon>Gammaproteobacteria</taxon>
        <taxon>Enterobacterales</taxon>
        <taxon>Enterobacteriaceae</taxon>
        <taxon>Escherichia</taxon>
    </lineage>
</organism>
<proteinExistence type="inferred from homology"/>
<reference key="1">
    <citation type="journal article" date="2009" name="PLoS Genet.">
        <title>Organised genome dynamics in the Escherichia coli species results in highly diverse adaptive paths.</title>
        <authorList>
            <person name="Touchon M."/>
            <person name="Hoede C."/>
            <person name="Tenaillon O."/>
            <person name="Barbe V."/>
            <person name="Baeriswyl S."/>
            <person name="Bidet P."/>
            <person name="Bingen E."/>
            <person name="Bonacorsi S."/>
            <person name="Bouchier C."/>
            <person name="Bouvet O."/>
            <person name="Calteau A."/>
            <person name="Chiapello H."/>
            <person name="Clermont O."/>
            <person name="Cruveiller S."/>
            <person name="Danchin A."/>
            <person name="Diard M."/>
            <person name="Dossat C."/>
            <person name="Karoui M.E."/>
            <person name="Frapy E."/>
            <person name="Garry L."/>
            <person name="Ghigo J.M."/>
            <person name="Gilles A.M."/>
            <person name="Johnson J."/>
            <person name="Le Bouguenec C."/>
            <person name="Lescat M."/>
            <person name="Mangenot S."/>
            <person name="Martinez-Jehanne V."/>
            <person name="Matic I."/>
            <person name="Nassif X."/>
            <person name="Oztas S."/>
            <person name="Petit M.A."/>
            <person name="Pichon C."/>
            <person name="Rouy Z."/>
            <person name="Ruf C.S."/>
            <person name="Schneider D."/>
            <person name="Tourret J."/>
            <person name="Vacherie B."/>
            <person name="Vallenet D."/>
            <person name="Medigue C."/>
            <person name="Rocha E.P.C."/>
            <person name="Denamur E."/>
        </authorList>
    </citation>
    <scope>NUCLEOTIDE SEQUENCE [LARGE SCALE GENOMIC DNA]</scope>
    <source>
        <strain>IAI39 / ExPEC</strain>
    </source>
</reference>